<keyword id="KW-0143">Chaperone</keyword>
<keyword id="KW-1015">Disulfide bond</keyword>
<keyword id="KW-0472">Membrane</keyword>
<keyword id="KW-0479">Metal-binding</keyword>
<keyword id="KW-0496">Mitochondrion</keyword>
<keyword id="KW-0999">Mitochondrion inner membrane</keyword>
<keyword id="KW-0653">Protein transport</keyword>
<keyword id="KW-1185">Reference proteome</keyword>
<keyword id="KW-0811">Translocation</keyword>
<keyword id="KW-0813">Transport</keyword>
<keyword id="KW-0862">Zinc</keyword>
<gene>
    <name type="primary">TIM9</name>
    <name type="ordered locus">YALI0E05115g</name>
</gene>
<evidence type="ECO:0000250" key="1"/>
<evidence type="ECO:0000305" key="2"/>
<feature type="chain" id="PRO_0000228048" description="Mitochondrial import inner membrane translocase subunit TIM9">
    <location>
        <begin position="1"/>
        <end position="85"/>
    </location>
</feature>
<feature type="short sequence motif" description="Twin CX3C motif">
    <location>
        <begin position="35"/>
        <end position="59"/>
    </location>
</feature>
<feature type="disulfide bond" evidence="1">
    <location>
        <begin position="35"/>
        <end position="59"/>
    </location>
</feature>
<feature type="disulfide bond" evidence="1">
    <location>
        <begin position="39"/>
        <end position="55"/>
    </location>
</feature>
<sequence length="85" mass="10217">MDQLNNREQQEFQQLVEQKQMKDFMRLYSSLVQRCFTDCVNDFTSKALSSREESCLEKCSEKFLKHSERVGQRFQEQNAALMQKR</sequence>
<protein>
    <recommendedName>
        <fullName>Mitochondrial import inner membrane translocase subunit TIM9</fullName>
    </recommendedName>
</protein>
<organism>
    <name type="scientific">Yarrowia lipolytica (strain CLIB 122 / E 150)</name>
    <name type="common">Yeast</name>
    <name type="synonym">Candida lipolytica</name>
    <dbReference type="NCBI Taxonomy" id="284591"/>
    <lineage>
        <taxon>Eukaryota</taxon>
        <taxon>Fungi</taxon>
        <taxon>Dikarya</taxon>
        <taxon>Ascomycota</taxon>
        <taxon>Saccharomycotina</taxon>
        <taxon>Dipodascomycetes</taxon>
        <taxon>Dipodascales</taxon>
        <taxon>Dipodascales incertae sedis</taxon>
        <taxon>Yarrowia</taxon>
    </lineage>
</organism>
<proteinExistence type="inferred from homology"/>
<accession>Q6C6Z2</accession>
<comment type="function">
    <text evidence="1">Mitochondrial intermembrane chaperone that participates in the import and insertion of multi-pass transmembrane proteins into the mitochondrial inner membrane. Also required for the transfer of beta-barrel precursors from the TOM complex to the sorting and assembly machinery (SAM complex) of the outer membrane. Acts as a chaperone-like protein that protects the hydrophobic precursors from aggregation and guide them through the mitochondrial intermembrane space (By similarity).</text>
</comment>
<comment type="subunit">
    <text evidence="1">Heterohexamer; composed of 3 copies of TIM9 and 3 copies of TIM10, named soluble 70 kDa complex. Associates with the TIM22 complex, whose core is composed of TIM22 and TIM54. Interacts with the transmembrane regions of multi-pass transmembrane proteins in transit (By similarity).</text>
</comment>
<comment type="subcellular location">
    <subcellularLocation>
        <location evidence="1">Mitochondrion inner membrane</location>
        <topology evidence="1">Peripheral membrane protein</topology>
        <orientation evidence="1">Intermembrane side</orientation>
    </subcellularLocation>
</comment>
<comment type="domain">
    <text evidence="1">The twin CX3C motif contains 4 conserved Cys residues that form 2 disulfide bonds in the mitochondrial intermembrane space. However, during the transit of TIM9 from cytoplasm into mitochondrion, the Cys residues probably coordinate zinc, thereby preventing folding and allowing its transfer across mitochondrial outer membrane (By similarity).</text>
</comment>
<comment type="similarity">
    <text evidence="2">Belongs to the small Tim family.</text>
</comment>
<reference key="1">
    <citation type="journal article" date="2004" name="Nature">
        <title>Genome evolution in yeasts.</title>
        <authorList>
            <person name="Dujon B."/>
            <person name="Sherman D."/>
            <person name="Fischer G."/>
            <person name="Durrens P."/>
            <person name="Casaregola S."/>
            <person name="Lafontaine I."/>
            <person name="de Montigny J."/>
            <person name="Marck C."/>
            <person name="Neuveglise C."/>
            <person name="Talla E."/>
            <person name="Goffard N."/>
            <person name="Frangeul L."/>
            <person name="Aigle M."/>
            <person name="Anthouard V."/>
            <person name="Babour A."/>
            <person name="Barbe V."/>
            <person name="Barnay S."/>
            <person name="Blanchin S."/>
            <person name="Beckerich J.-M."/>
            <person name="Beyne E."/>
            <person name="Bleykasten C."/>
            <person name="Boisrame A."/>
            <person name="Boyer J."/>
            <person name="Cattolico L."/>
            <person name="Confanioleri F."/>
            <person name="de Daruvar A."/>
            <person name="Despons L."/>
            <person name="Fabre E."/>
            <person name="Fairhead C."/>
            <person name="Ferry-Dumazet H."/>
            <person name="Groppi A."/>
            <person name="Hantraye F."/>
            <person name="Hennequin C."/>
            <person name="Jauniaux N."/>
            <person name="Joyet P."/>
            <person name="Kachouri R."/>
            <person name="Kerrest A."/>
            <person name="Koszul R."/>
            <person name="Lemaire M."/>
            <person name="Lesur I."/>
            <person name="Ma L."/>
            <person name="Muller H."/>
            <person name="Nicaud J.-M."/>
            <person name="Nikolski M."/>
            <person name="Oztas S."/>
            <person name="Ozier-Kalogeropoulos O."/>
            <person name="Pellenz S."/>
            <person name="Potier S."/>
            <person name="Richard G.-F."/>
            <person name="Straub M.-L."/>
            <person name="Suleau A."/>
            <person name="Swennen D."/>
            <person name="Tekaia F."/>
            <person name="Wesolowski-Louvel M."/>
            <person name="Westhof E."/>
            <person name="Wirth B."/>
            <person name="Zeniou-Meyer M."/>
            <person name="Zivanovic Y."/>
            <person name="Bolotin-Fukuhara M."/>
            <person name="Thierry A."/>
            <person name="Bouchier C."/>
            <person name="Caudron B."/>
            <person name="Scarpelli C."/>
            <person name="Gaillardin C."/>
            <person name="Weissenbach J."/>
            <person name="Wincker P."/>
            <person name="Souciet J.-L."/>
        </authorList>
    </citation>
    <scope>NUCLEOTIDE SEQUENCE [LARGE SCALE GENOMIC DNA]</scope>
    <source>
        <strain>CLIB 122 / E 150</strain>
    </source>
</reference>
<name>TIM9_YARLI</name>
<dbReference type="EMBL" id="CR382131">
    <property type="protein sequence ID" value="CAG79151.1"/>
    <property type="molecule type" value="Genomic_DNA"/>
</dbReference>
<dbReference type="RefSeq" id="XP_503570.1">
    <property type="nucleotide sequence ID" value="XM_503570.1"/>
</dbReference>
<dbReference type="SMR" id="Q6C6Z2"/>
<dbReference type="FunCoup" id="Q6C6Z2">
    <property type="interactions" value="935"/>
</dbReference>
<dbReference type="STRING" id="284591.Q6C6Z2"/>
<dbReference type="EnsemblFungi" id="CAG79151">
    <property type="protein sequence ID" value="CAG79151"/>
    <property type="gene ID" value="YALI0_E05115g"/>
</dbReference>
<dbReference type="KEGG" id="yli:2912275"/>
<dbReference type="VEuPathDB" id="FungiDB:YALI0_E05115g"/>
<dbReference type="HOGENOM" id="CLU_141397_3_0_1"/>
<dbReference type="InParanoid" id="Q6C6Z2"/>
<dbReference type="OMA" id="QDFLRMY"/>
<dbReference type="OrthoDB" id="115757at4891"/>
<dbReference type="Proteomes" id="UP000001300">
    <property type="component" value="Chromosome E"/>
</dbReference>
<dbReference type="GO" id="GO:0042719">
    <property type="term" value="C:mitochondrial intermembrane space protein transporter complex"/>
    <property type="evidence" value="ECO:0007669"/>
    <property type="project" value="EnsemblFungi"/>
</dbReference>
<dbReference type="GO" id="GO:0042721">
    <property type="term" value="C:TIM22 mitochondrial import inner membrane insertion complex"/>
    <property type="evidence" value="ECO:0007669"/>
    <property type="project" value="EnsemblFungi"/>
</dbReference>
<dbReference type="GO" id="GO:0046872">
    <property type="term" value="F:metal ion binding"/>
    <property type="evidence" value="ECO:0007669"/>
    <property type="project" value="UniProtKB-KW"/>
</dbReference>
<dbReference type="GO" id="GO:0140318">
    <property type="term" value="F:protein transporter activity"/>
    <property type="evidence" value="ECO:0007669"/>
    <property type="project" value="EnsemblFungi"/>
</dbReference>
<dbReference type="GO" id="GO:0051082">
    <property type="term" value="F:unfolded protein binding"/>
    <property type="evidence" value="ECO:0007669"/>
    <property type="project" value="EnsemblFungi"/>
</dbReference>
<dbReference type="GO" id="GO:0045039">
    <property type="term" value="P:protein insertion into mitochondrial inner membrane"/>
    <property type="evidence" value="ECO:0007669"/>
    <property type="project" value="EnsemblFungi"/>
</dbReference>
<dbReference type="FunFam" id="1.10.287.810:FF:000008">
    <property type="entry name" value="Mitochondrial import inner membrane translocase subunit TIM9"/>
    <property type="match status" value="1"/>
</dbReference>
<dbReference type="Gene3D" id="1.10.287.810">
    <property type="entry name" value="Mitochondrial import inner membrane translocase subunit tim13 like domains"/>
    <property type="match status" value="1"/>
</dbReference>
<dbReference type="InterPro" id="IPR050673">
    <property type="entry name" value="Mito_inner_translocase_sub"/>
</dbReference>
<dbReference type="InterPro" id="IPR004217">
    <property type="entry name" value="Tim10-like"/>
</dbReference>
<dbReference type="InterPro" id="IPR035427">
    <property type="entry name" value="Tim10-like_dom_sf"/>
</dbReference>
<dbReference type="PANTHER" id="PTHR13172">
    <property type="entry name" value="MITOCHONDRIAL IMPORT INNER MEMBRANE TRANSLOCASE SUBUNIT TIM9B"/>
    <property type="match status" value="1"/>
</dbReference>
<dbReference type="Pfam" id="PF02953">
    <property type="entry name" value="zf-Tim10_DDP"/>
    <property type="match status" value="1"/>
</dbReference>
<dbReference type="SUPFAM" id="SSF144122">
    <property type="entry name" value="Tim10-like"/>
    <property type="match status" value="1"/>
</dbReference>